<reference key="1">
    <citation type="journal article" date="2002" name="Nature">
        <title>The genome sequence of Schizosaccharomyces pombe.</title>
        <authorList>
            <person name="Wood V."/>
            <person name="Gwilliam R."/>
            <person name="Rajandream M.A."/>
            <person name="Lyne M.H."/>
            <person name="Lyne R."/>
            <person name="Stewart A."/>
            <person name="Sgouros J.G."/>
            <person name="Peat N."/>
            <person name="Hayles J."/>
            <person name="Baker S.G."/>
            <person name="Basham D."/>
            <person name="Bowman S."/>
            <person name="Brooks K."/>
            <person name="Brown D."/>
            <person name="Brown S."/>
            <person name="Chillingworth T."/>
            <person name="Churcher C.M."/>
            <person name="Collins M."/>
            <person name="Connor R."/>
            <person name="Cronin A."/>
            <person name="Davis P."/>
            <person name="Feltwell T."/>
            <person name="Fraser A."/>
            <person name="Gentles S."/>
            <person name="Goble A."/>
            <person name="Hamlin N."/>
            <person name="Harris D.E."/>
            <person name="Hidalgo J."/>
            <person name="Hodgson G."/>
            <person name="Holroyd S."/>
            <person name="Hornsby T."/>
            <person name="Howarth S."/>
            <person name="Huckle E.J."/>
            <person name="Hunt S."/>
            <person name="Jagels K."/>
            <person name="James K.D."/>
            <person name="Jones L."/>
            <person name="Jones M."/>
            <person name="Leather S."/>
            <person name="McDonald S."/>
            <person name="McLean J."/>
            <person name="Mooney P."/>
            <person name="Moule S."/>
            <person name="Mungall K.L."/>
            <person name="Murphy L.D."/>
            <person name="Niblett D."/>
            <person name="Odell C."/>
            <person name="Oliver K."/>
            <person name="O'Neil S."/>
            <person name="Pearson D."/>
            <person name="Quail M.A."/>
            <person name="Rabbinowitsch E."/>
            <person name="Rutherford K.M."/>
            <person name="Rutter S."/>
            <person name="Saunders D."/>
            <person name="Seeger K."/>
            <person name="Sharp S."/>
            <person name="Skelton J."/>
            <person name="Simmonds M.N."/>
            <person name="Squares R."/>
            <person name="Squares S."/>
            <person name="Stevens K."/>
            <person name="Taylor K."/>
            <person name="Taylor R.G."/>
            <person name="Tivey A."/>
            <person name="Walsh S.V."/>
            <person name="Warren T."/>
            <person name="Whitehead S."/>
            <person name="Woodward J.R."/>
            <person name="Volckaert G."/>
            <person name="Aert R."/>
            <person name="Robben J."/>
            <person name="Grymonprez B."/>
            <person name="Weltjens I."/>
            <person name="Vanstreels E."/>
            <person name="Rieger M."/>
            <person name="Schaefer M."/>
            <person name="Mueller-Auer S."/>
            <person name="Gabel C."/>
            <person name="Fuchs M."/>
            <person name="Duesterhoeft A."/>
            <person name="Fritzc C."/>
            <person name="Holzer E."/>
            <person name="Moestl D."/>
            <person name="Hilbert H."/>
            <person name="Borzym K."/>
            <person name="Langer I."/>
            <person name="Beck A."/>
            <person name="Lehrach H."/>
            <person name="Reinhardt R."/>
            <person name="Pohl T.M."/>
            <person name="Eger P."/>
            <person name="Zimmermann W."/>
            <person name="Wedler H."/>
            <person name="Wambutt R."/>
            <person name="Purnelle B."/>
            <person name="Goffeau A."/>
            <person name="Cadieu E."/>
            <person name="Dreano S."/>
            <person name="Gloux S."/>
            <person name="Lelaure V."/>
            <person name="Mottier S."/>
            <person name="Galibert F."/>
            <person name="Aves S.J."/>
            <person name="Xiang Z."/>
            <person name="Hunt C."/>
            <person name="Moore K."/>
            <person name="Hurst S.M."/>
            <person name="Lucas M."/>
            <person name="Rochet M."/>
            <person name="Gaillardin C."/>
            <person name="Tallada V.A."/>
            <person name="Garzon A."/>
            <person name="Thode G."/>
            <person name="Daga R.R."/>
            <person name="Cruzado L."/>
            <person name="Jimenez J."/>
            <person name="Sanchez M."/>
            <person name="del Rey F."/>
            <person name="Benito J."/>
            <person name="Dominguez A."/>
            <person name="Revuelta J.L."/>
            <person name="Moreno S."/>
            <person name="Armstrong J."/>
            <person name="Forsburg S.L."/>
            <person name="Cerutti L."/>
            <person name="Lowe T."/>
            <person name="McCombie W.R."/>
            <person name="Paulsen I."/>
            <person name="Potashkin J."/>
            <person name="Shpakovski G.V."/>
            <person name="Ussery D."/>
            <person name="Barrell B.G."/>
            <person name="Nurse P."/>
        </authorList>
    </citation>
    <scope>NUCLEOTIDE SEQUENCE [LARGE SCALE GENOMIC DNA]</scope>
    <source>
        <strain>972 / ATCC 24843</strain>
    </source>
</reference>
<reference key="2">
    <citation type="journal article" date="2006" name="Nat. Biotechnol.">
        <title>ORFeome cloning and global analysis of protein localization in the fission yeast Schizosaccharomyces pombe.</title>
        <authorList>
            <person name="Matsuyama A."/>
            <person name="Arai R."/>
            <person name="Yashiroda Y."/>
            <person name="Shirai A."/>
            <person name="Kamata A."/>
            <person name="Sekido S."/>
            <person name="Kobayashi Y."/>
            <person name="Hashimoto A."/>
            <person name="Hamamoto M."/>
            <person name="Hiraoka Y."/>
            <person name="Horinouchi S."/>
            <person name="Yoshida M."/>
        </authorList>
    </citation>
    <scope>SUBCELLULAR LOCATION [LARGE SCALE ANALYSIS]</scope>
</reference>
<comment type="subcellular location">
    <subcellularLocation>
        <location evidence="2">Cytoplasm</location>
    </subcellularLocation>
    <subcellularLocation>
        <location evidence="2">Mitochondrion</location>
    </subcellularLocation>
    <subcellularLocation>
        <location evidence="2">Nucleus</location>
    </subcellularLocation>
</comment>
<feature type="chain" id="PRO_0000304093" description="Uncharacterized protein C19G7.18c">
    <location>
        <begin position="1"/>
        <end position="252"/>
    </location>
</feature>
<feature type="region of interest" description="Disordered" evidence="1">
    <location>
        <begin position="108"/>
        <end position="252"/>
    </location>
</feature>
<feature type="compositionally biased region" description="Polar residues" evidence="1">
    <location>
        <begin position="108"/>
        <end position="122"/>
    </location>
</feature>
<feature type="compositionally biased region" description="Polar residues" evidence="1">
    <location>
        <begin position="136"/>
        <end position="153"/>
    </location>
</feature>
<feature type="compositionally biased region" description="Basic and acidic residues" evidence="1">
    <location>
        <begin position="154"/>
        <end position="172"/>
    </location>
</feature>
<feature type="compositionally biased region" description="Polar residues" evidence="1">
    <location>
        <begin position="201"/>
        <end position="226"/>
    </location>
</feature>
<sequence length="252" mass="28529">MDFFWERMLNDPQNHFSDDQKEFLNHAKYRVKRNTIFGMLVGFSLPLYLARNKKVTPIRLYATSIIGGLAGNGVAQITTLAYNLSAIRQRDDGFEILRKIQDSLIRQRTTMRQGRFPSSSSEFPPKNSKYQLPGSMPNTGASSSQDPFTNSQSTEKEDAMYSKDNGFEDRSKPASAWEAIRNRNRNTGNNSFPFYEEDSSVKSTDSAFSGQENSEAFPSRTSNLGSEQLDEPISHEQEAFDQLIWNDSSSSK</sequence>
<protein>
    <recommendedName>
        <fullName>Uncharacterized protein C19G7.18c</fullName>
    </recommendedName>
</protein>
<proteinExistence type="predicted"/>
<accession>Q7Z995</accession>
<dbReference type="EMBL" id="CU329671">
    <property type="protein sequence ID" value="CAD99122.1"/>
    <property type="molecule type" value="Genomic_DNA"/>
</dbReference>
<dbReference type="RefSeq" id="NP_001018812.1">
    <property type="nucleotide sequence ID" value="NM_001021885.2"/>
</dbReference>
<dbReference type="BioGRID" id="280269">
    <property type="interactions" value="7"/>
</dbReference>
<dbReference type="STRING" id="284812.Q7Z995"/>
<dbReference type="PaxDb" id="4896-SPBC19G7.18c.1"/>
<dbReference type="EnsemblFungi" id="SPBC19G7.18c.1">
    <property type="protein sequence ID" value="SPBC19G7.18c.1:pep"/>
    <property type="gene ID" value="SPBC19G7.18c"/>
</dbReference>
<dbReference type="KEGG" id="spo:3361193"/>
<dbReference type="PomBase" id="SPBC19G7.18c"/>
<dbReference type="VEuPathDB" id="FungiDB:SPBC19G7.18c"/>
<dbReference type="HOGENOM" id="CLU_1138560_0_0_1"/>
<dbReference type="InParanoid" id="Q7Z995"/>
<dbReference type="OMA" id="FWERMLN"/>
<dbReference type="PRO" id="PR:Q7Z995"/>
<dbReference type="Proteomes" id="UP000002485">
    <property type="component" value="Chromosome II"/>
</dbReference>
<dbReference type="GO" id="GO:0005829">
    <property type="term" value="C:cytosol"/>
    <property type="evidence" value="ECO:0007005"/>
    <property type="project" value="PomBase"/>
</dbReference>
<dbReference type="GO" id="GO:0005768">
    <property type="term" value="C:endosome"/>
    <property type="evidence" value="ECO:0000266"/>
    <property type="project" value="PomBase"/>
</dbReference>
<dbReference type="GO" id="GO:0005739">
    <property type="term" value="C:mitochondrion"/>
    <property type="evidence" value="ECO:0007005"/>
    <property type="project" value="PomBase"/>
</dbReference>
<dbReference type="GO" id="GO:0005634">
    <property type="term" value="C:nucleus"/>
    <property type="evidence" value="ECO:0007005"/>
    <property type="project" value="PomBase"/>
</dbReference>
<dbReference type="GO" id="GO:0006897">
    <property type="term" value="P:endocytosis"/>
    <property type="evidence" value="ECO:0000266"/>
    <property type="project" value="PomBase"/>
</dbReference>
<keyword id="KW-0963">Cytoplasm</keyword>
<keyword id="KW-0496">Mitochondrion</keyword>
<keyword id="KW-0539">Nucleus</keyword>
<keyword id="KW-1185">Reference proteome</keyword>
<gene>
    <name type="ORF">SPBC19G7.18c</name>
</gene>
<evidence type="ECO:0000256" key="1">
    <source>
        <dbReference type="SAM" id="MobiDB-lite"/>
    </source>
</evidence>
<evidence type="ECO:0000269" key="2">
    <source>
    </source>
</evidence>
<organism>
    <name type="scientific">Schizosaccharomyces pombe (strain 972 / ATCC 24843)</name>
    <name type="common">Fission yeast</name>
    <dbReference type="NCBI Taxonomy" id="284812"/>
    <lineage>
        <taxon>Eukaryota</taxon>
        <taxon>Fungi</taxon>
        <taxon>Dikarya</taxon>
        <taxon>Ascomycota</taxon>
        <taxon>Taphrinomycotina</taxon>
        <taxon>Schizosaccharomycetes</taxon>
        <taxon>Schizosaccharomycetales</taxon>
        <taxon>Schizosaccharomycetaceae</taxon>
        <taxon>Schizosaccharomyces</taxon>
    </lineage>
</organism>
<name>YGMI_SCHPO</name>